<dbReference type="EC" id="2.5.1.6" evidence="1"/>
<dbReference type="EMBL" id="CP001029">
    <property type="protein sequence ID" value="ACB81656.1"/>
    <property type="molecule type" value="Genomic_DNA"/>
</dbReference>
<dbReference type="RefSeq" id="WP_012455372.1">
    <property type="nucleotide sequence ID" value="NC_010725.1"/>
</dbReference>
<dbReference type="SMR" id="B1ZKT6"/>
<dbReference type="STRING" id="441620.Mpop_3506"/>
<dbReference type="KEGG" id="mpo:Mpop_3506"/>
<dbReference type="eggNOG" id="COG0192">
    <property type="taxonomic scope" value="Bacteria"/>
</dbReference>
<dbReference type="HOGENOM" id="CLU_041802_1_1_5"/>
<dbReference type="OrthoDB" id="9801686at2"/>
<dbReference type="UniPathway" id="UPA00315">
    <property type="reaction ID" value="UER00080"/>
</dbReference>
<dbReference type="Proteomes" id="UP000007136">
    <property type="component" value="Chromosome"/>
</dbReference>
<dbReference type="GO" id="GO:0005737">
    <property type="term" value="C:cytoplasm"/>
    <property type="evidence" value="ECO:0007669"/>
    <property type="project" value="UniProtKB-SubCell"/>
</dbReference>
<dbReference type="GO" id="GO:0005524">
    <property type="term" value="F:ATP binding"/>
    <property type="evidence" value="ECO:0007669"/>
    <property type="project" value="UniProtKB-UniRule"/>
</dbReference>
<dbReference type="GO" id="GO:0000287">
    <property type="term" value="F:magnesium ion binding"/>
    <property type="evidence" value="ECO:0007669"/>
    <property type="project" value="UniProtKB-UniRule"/>
</dbReference>
<dbReference type="GO" id="GO:0004478">
    <property type="term" value="F:methionine adenosyltransferase activity"/>
    <property type="evidence" value="ECO:0007669"/>
    <property type="project" value="UniProtKB-UniRule"/>
</dbReference>
<dbReference type="GO" id="GO:0006730">
    <property type="term" value="P:one-carbon metabolic process"/>
    <property type="evidence" value="ECO:0007669"/>
    <property type="project" value="UniProtKB-KW"/>
</dbReference>
<dbReference type="GO" id="GO:0006556">
    <property type="term" value="P:S-adenosylmethionine biosynthetic process"/>
    <property type="evidence" value="ECO:0007669"/>
    <property type="project" value="UniProtKB-UniRule"/>
</dbReference>
<dbReference type="CDD" id="cd18079">
    <property type="entry name" value="S-AdoMet_synt"/>
    <property type="match status" value="1"/>
</dbReference>
<dbReference type="Gene3D" id="3.30.300.10">
    <property type="match status" value="3"/>
</dbReference>
<dbReference type="HAMAP" id="MF_00086">
    <property type="entry name" value="S_AdoMet_synth1"/>
    <property type="match status" value="1"/>
</dbReference>
<dbReference type="InterPro" id="IPR022631">
    <property type="entry name" value="ADOMET_SYNTHASE_CS"/>
</dbReference>
<dbReference type="InterPro" id="IPR022630">
    <property type="entry name" value="S-AdoMet_synt_C"/>
</dbReference>
<dbReference type="InterPro" id="IPR022629">
    <property type="entry name" value="S-AdoMet_synt_central"/>
</dbReference>
<dbReference type="InterPro" id="IPR022628">
    <property type="entry name" value="S-AdoMet_synt_N"/>
</dbReference>
<dbReference type="InterPro" id="IPR002133">
    <property type="entry name" value="S-AdoMet_synthetase"/>
</dbReference>
<dbReference type="InterPro" id="IPR022636">
    <property type="entry name" value="S-AdoMet_synthetase_sfam"/>
</dbReference>
<dbReference type="NCBIfam" id="TIGR01034">
    <property type="entry name" value="metK"/>
    <property type="match status" value="1"/>
</dbReference>
<dbReference type="PANTHER" id="PTHR11964">
    <property type="entry name" value="S-ADENOSYLMETHIONINE SYNTHETASE"/>
    <property type="match status" value="1"/>
</dbReference>
<dbReference type="Pfam" id="PF02773">
    <property type="entry name" value="S-AdoMet_synt_C"/>
    <property type="match status" value="1"/>
</dbReference>
<dbReference type="Pfam" id="PF02772">
    <property type="entry name" value="S-AdoMet_synt_M"/>
    <property type="match status" value="1"/>
</dbReference>
<dbReference type="Pfam" id="PF00438">
    <property type="entry name" value="S-AdoMet_synt_N"/>
    <property type="match status" value="1"/>
</dbReference>
<dbReference type="PIRSF" id="PIRSF000497">
    <property type="entry name" value="MAT"/>
    <property type="match status" value="1"/>
</dbReference>
<dbReference type="SUPFAM" id="SSF55973">
    <property type="entry name" value="S-adenosylmethionine synthetase"/>
    <property type="match status" value="3"/>
</dbReference>
<dbReference type="PROSITE" id="PS00376">
    <property type="entry name" value="ADOMET_SYNTHASE_1"/>
    <property type="match status" value="1"/>
</dbReference>
<dbReference type="PROSITE" id="PS00377">
    <property type="entry name" value="ADOMET_SYNTHASE_2"/>
    <property type="match status" value="1"/>
</dbReference>
<reference key="1">
    <citation type="submission" date="2008-04" db="EMBL/GenBank/DDBJ databases">
        <title>Complete sequence of chromosome of Methylobacterium populi BJ001.</title>
        <authorList>
            <consortium name="US DOE Joint Genome Institute"/>
            <person name="Copeland A."/>
            <person name="Lucas S."/>
            <person name="Lapidus A."/>
            <person name="Glavina del Rio T."/>
            <person name="Dalin E."/>
            <person name="Tice H."/>
            <person name="Bruce D."/>
            <person name="Goodwin L."/>
            <person name="Pitluck S."/>
            <person name="Chertkov O."/>
            <person name="Brettin T."/>
            <person name="Detter J.C."/>
            <person name="Han C."/>
            <person name="Kuske C.R."/>
            <person name="Schmutz J."/>
            <person name="Larimer F."/>
            <person name="Land M."/>
            <person name="Hauser L."/>
            <person name="Kyrpides N."/>
            <person name="Mikhailova N."/>
            <person name="Marx C."/>
            <person name="Richardson P."/>
        </authorList>
    </citation>
    <scope>NUCLEOTIDE SEQUENCE [LARGE SCALE GENOMIC DNA]</scope>
    <source>
        <strain>ATCC BAA-705 / NCIMB 13946 / BJ001</strain>
    </source>
</reference>
<proteinExistence type="inferred from homology"/>
<keyword id="KW-0067">ATP-binding</keyword>
<keyword id="KW-0963">Cytoplasm</keyword>
<keyword id="KW-0460">Magnesium</keyword>
<keyword id="KW-0479">Metal-binding</keyword>
<keyword id="KW-0547">Nucleotide-binding</keyword>
<keyword id="KW-0554">One-carbon metabolism</keyword>
<keyword id="KW-0630">Potassium</keyword>
<keyword id="KW-0808">Transferase</keyword>
<evidence type="ECO:0000255" key="1">
    <source>
        <dbReference type="HAMAP-Rule" id="MF_00086"/>
    </source>
</evidence>
<evidence type="ECO:0000256" key="2">
    <source>
        <dbReference type="SAM" id="MobiDB-lite"/>
    </source>
</evidence>
<name>METK_METPB</name>
<organism>
    <name type="scientific">Methylorubrum populi (strain ATCC BAA-705 / NCIMB 13946 / BJ001)</name>
    <name type="common">Methylobacterium populi</name>
    <dbReference type="NCBI Taxonomy" id="441620"/>
    <lineage>
        <taxon>Bacteria</taxon>
        <taxon>Pseudomonadati</taxon>
        <taxon>Pseudomonadota</taxon>
        <taxon>Alphaproteobacteria</taxon>
        <taxon>Hyphomicrobiales</taxon>
        <taxon>Methylobacteriaceae</taxon>
        <taxon>Methylorubrum</taxon>
    </lineage>
</organism>
<feature type="chain" id="PRO_1000093062" description="S-adenosylmethionine synthase">
    <location>
        <begin position="1"/>
        <end position="391"/>
    </location>
</feature>
<feature type="region of interest" description="Disordered" evidence="2">
    <location>
        <begin position="1"/>
        <end position="20"/>
    </location>
</feature>
<feature type="region of interest" description="Flexible loop" evidence="1">
    <location>
        <begin position="102"/>
        <end position="112"/>
    </location>
</feature>
<feature type="binding site" description="in other chain" evidence="1">
    <location>
        <position position="17"/>
    </location>
    <ligand>
        <name>ATP</name>
        <dbReference type="ChEBI" id="CHEBI:30616"/>
        <note>ligand shared between two neighboring subunits</note>
    </ligand>
</feature>
<feature type="binding site" evidence="1">
    <location>
        <position position="19"/>
    </location>
    <ligand>
        <name>Mg(2+)</name>
        <dbReference type="ChEBI" id="CHEBI:18420"/>
    </ligand>
</feature>
<feature type="binding site" evidence="1">
    <location>
        <position position="45"/>
    </location>
    <ligand>
        <name>K(+)</name>
        <dbReference type="ChEBI" id="CHEBI:29103"/>
    </ligand>
</feature>
<feature type="binding site" description="in other chain" evidence="1">
    <location>
        <position position="58"/>
    </location>
    <ligand>
        <name>L-methionine</name>
        <dbReference type="ChEBI" id="CHEBI:57844"/>
        <note>ligand shared between two neighboring subunits</note>
    </ligand>
</feature>
<feature type="binding site" description="in other chain" evidence="1">
    <location>
        <position position="102"/>
    </location>
    <ligand>
        <name>L-methionine</name>
        <dbReference type="ChEBI" id="CHEBI:57844"/>
        <note>ligand shared between two neighboring subunits</note>
    </ligand>
</feature>
<feature type="binding site" description="in other chain" evidence="1">
    <location>
        <begin position="169"/>
        <end position="171"/>
    </location>
    <ligand>
        <name>ATP</name>
        <dbReference type="ChEBI" id="CHEBI:30616"/>
        <note>ligand shared between two neighboring subunits</note>
    </ligand>
</feature>
<feature type="binding site" description="in other chain" evidence="1">
    <location>
        <begin position="235"/>
        <end position="236"/>
    </location>
    <ligand>
        <name>ATP</name>
        <dbReference type="ChEBI" id="CHEBI:30616"/>
        <note>ligand shared between two neighboring subunits</note>
    </ligand>
</feature>
<feature type="binding site" evidence="1">
    <location>
        <position position="244"/>
    </location>
    <ligand>
        <name>ATP</name>
        <dbReference type="ChEBI" id="CHEBI:30616"/>
        <note>ligand shared between two neighboring subunits</note>
    </ligand>
</feature>
<feature type="binding site" evidence="1">
    <location>
        <position position="244"/>
    </location>
    <ligand>
        <name>L-methionine</name>
        <dbReference type="ChEBI" id="CHEBI:57844"/>
        <note>ligand shared between two neighboring subunits</note>
    </ligand>
</feature>
<feature type="binding site" description="in other chain" evidence="1">
    <location>
        <begin position="250"/>
        <end position="251"/>
    </location>
    <ligand>
        <name>ATP</name>
        <dbReference type="ChEBI" id="CHEBI:30616"/>
        <note>ligand shared between two neighboring subunits</note>
    </ligand>
</feature>
<feature type="binding site" evidence="1">
    <location>
        <position position="267"/>
    </location>
    <ligand>
        <name>ATP</name>
        <dbReference type="ChEBI" id="CHEBI:30616"/>
        <note>ligand shared between two neighboring subunits</note>
    </ligand>
</feature>
<feature type="binding site" evidence="1">
    <location>
        <position position="271"/>
    </location>
    <ligand>
        <name>ATP</name>
        <dbReference type="ChEBI" id="CHEBI:30616"/>
        <note>ligand shared between two neighboring subunits</note>
    </ligand>
</feature>
<feature type="binding site" description="in other chain" evidence="1">
    <location>
        <position position="275"/>
    </location>
    <ligand>
        <name>L-methionine</name>
        <dbReference type="ChEBI" id="CHEBI:57844"/>
        <note>ligand shared between two neighboring subunits</note>
    </ligand>
</feature>
<protein>
    <recommendedName>
        <fullName evidence="1">S-adenosylmethionine synthase</fullName>
        <shortName evidence="1">AdoMet synthase</shortName>
        <ecNumber evidence="1">2.5.1.6</ecNumber>
    </recommendedName>
    <alternativeName>
        <fullName evidence="1">MAT</fullName>
    </alternativeName>
    <alternativeName>
        <fullName evidence="1">Methionine adenosyltransferase</fullName>
    </alternativeName>
</protein>
<comment type="function">
    <text evidence="1">Catalyzes the formation of S-adenosylmethionine (AdoMet) from methionine and ATP. The overall synthetic reaction is composed of two sequential steps, AdoMet formation and the subsequent tripolyphosphate hydrolysis which occurs prior to release of AdoMet from the enzyme.</text>
</comment>
<comment type="catalytic activity">
    <reaction evidence="1">
        <text>L-methionine + ATP + H2O = S-adenosyl-L-methionine + phosphate + diphosphate</text>
        <dbReference type="Rhea" id="RHEA:21080"/>
        <dbReference type="ChEBI" id="CHEBI:15377"/>
        <dbReference type="ChEBI" id="CHEBI:30616"/>
        <dbReference type="ChEBI" id="CHEBI:33019"/>
        <dbReference type="ChEBI" id="CHEBI:43474"/>
        <dbReference type="ChEBI" id="CHEBI:57844"/>
        <dbReference type="ChEBI" id="CHEBI:59789"/>
        <dbReference type="EC" id="2.5.1.6"/>
    </reaction>
</comment>
<comment type="cofactor">
    <cofactor evidence="1">
        <name>Mg(2+)</name>
        <dbReference type="ChEBI" id="CHEBI:18420"/>
    </cofactor>
    <text evidence="1">Binds 2 divalent ions per subunit.</text>
</comment>
<comment type="cofactor">
    <cofactor evidence="1">
        <name>K(+)</name>
        <dbReference type="ChEBI" id="CHEBI:29103"/>
    </cofactor>
    <text evidence="1">Binds 1 potassium ion per subunit.</text>
</comment>
<comment type="pathway">
    <text evidence="1">Amino-acid biosynthesis; S-adenosyl-L-methionine biosynthesis; S-adenosyl-L-methionine from L-methionine: step 1/1.</text>
</comment>
<comment type="subunit">
    <text evidence="1">Homotetramer; dimer of dimers.</text>
</comment>
<comment type="subcellular location">
    <subcellularLocation>
        <location evidence="1">Cytoplasm</location>
    </subcellularLocation>
</comment>
<comment type="similarity">
    <text evidence="1">Belongs to the AdoMet synthase family.</text>
</comment>
<gene>
    <name evidence="1" type="primary">metK</name>
    <name type="ordered locus">Mpop_3506</name>
</gene>
<accession>B1ZKT6</accession>
<sequence length="391" mass="41761">MPRSDYLFTSESVSEGHPDKVSDRISDTVVDAYLAAMPEARLGVETLTTTNRVVIAGEVRGPDSVTFKDLEELTREAVRDIGYEQSGFHWKNNDVAIHLHAQSADIAQGVDAAGNKDEGAGDQGIMFGYAADETPALMPAPIFYAHKILKDLADARKAKQGDAAKLGPDAKSQVTVRYADGRPVEVTQIVLSTQHLDESLDSADVRAIVEPYILKALPQGWVNEGTVWHVNPTGKFVIGGPDGDAGLTGRKIIVDTYGGAAPHGGGAFSGKDPTKVDRSAAYAARYLAKNVVAAGLARRATIQLSYAIGVAKPLSIYVDLHGTGTVDEAKLEGVLMDALDLSPRGIRTALQLNKPIYARTSAYGHFGREPDADGGFSWEKTDLADKLKSAF</sequence>